<evidence type="ECO:0000255" key="1">
    <source>
        <dbReference type="HAMAP-Rule" id="MF_00191"/>
    </source>
</evidence>
<gene>
    <name evidence="1" type="primary">ispH</name>
    <name type="ordered locus">RHA1_ro05870</name>
</gene>
<name>ISPH_RHOJR</name>
<organism>
    <name type="scientific">Rhodococcus jostii (strain RHA1)</name>
    <dbReference type="NCBI Taxonomy" id="101510"/>
    <lineage>
        <taxon>Bacteria</taxon>
        <taxon>Bacillati</taxon>
        <taxon>Actinomycetota</taxon>
        <taxon>Actinomycetes</taxon>
        <taxon>Mycobacteriales</taxon>
        <taxon>Nocardiaceae</taxon>
        <taxon>Rhodococcus</taxon>
    </lineage>
</organism>
<reference key="1">
    <citation type="journal article" date="2006" name="Proc. Natl. Acad. Sci. U.S.A.">
        <title>The complete genome of Rhodococcus sp. RHA1 provides insights into a catabolic powerhouse.</title>
        <authorList>
            <person name="McLeod M.P."/>
            <person name="Warren R.L."/>
            <person name="Hsiao W.W.L."/>
            <person name="Araki N."/>
            <person name="Myhre M."/>
            <person name="Fernandes C."/>
            <person name="Miyazawa D."/>
            <person name="Wong W."/>
            <person name="Lillquist A.L."/>
            <person name="Wang D."/>
            <person name="Dosanjh M."/>
            <person name="Hara H."/>
            <person name="Petrescu A."/>
            <person name="Morin R.D."/>
            <person name="Yang G."/>
            <person name="Stott J.M."/>
            <person name="Schein J.E."/>
            <person name="Shin H."/>
            <person name="Smailus D."/>
            <person name="Siddiqui A.S."/>
            <person name="Marra M.A."/>
            <person name="Jones S.J.M."/>
            <person name="Holt R."/>
            <person name="Brinkman F.S.L."/>
            <person name="Miyauchi K."/>
            <person name="Fukuda M."/>
            <person name="Davies J.E."/>
            <person name="Mohn W.W."/>
            <person name="Eltis L.D."/>
        </authorList>
    </citation>
    <scope>NUCLEOTIDE SEQUENCE [LARGE SCALE GENOMIC DNA]</scope>
    <source>
        <strain>RHA1</strain>
    </source>
</reference>
<protein>
    <recommendedName>
        <fullName evidence="1">4-hydroxy-3-methylbut-2-enyl diphosphate reductase</fullName>
        <shortName evidence="1">HMBPP reductase</shortName>
        <ecNumber evidence="1">1.17.7.4</ecNumber>
    </recommendedName>
</protein>
<accession>Q0S489</accession>
<keyword id="KW-0004">4Fe-4S</keyword>
<keyword id="KW-0408">Iron</keyword>
<keyword id="KW-0411">Iron-sulfur</keyword>
<keyword id="KW-0414">Isoprene biosynthesis</keyword>
<keyword id="KW-0479">Metal-binding</keyword>
<keyword id="KW-0560">Oxidoreductase</keyword>
<comment type="function">
    <text evidence="1">Catalyzes the conversion of 1-hydroxy-2-methyl-2-(E)-butenyl 4-diphosphate (HMBPP) into a mixture of isopentenyl diphosphate (IPP) and dimethylallyl diphosphate (DMAPP). Acts in the terminal step of the DOXP/MEP pathway for isoprenoid precursor biosynthesis.</text>
</comment>
<comment type="catalytic activity">
    <reaction evidence="1">
        <text>isopentenyl diphosphate + 2 oxidized [2Fe-2S]-[ferredoxin] + H2O = (2E)-4-hydroxy-3-methylbut-2-enyl diphosphate + 2 reduced [2Fe-2S]-[ferredoxin] + 2 H(+)</text>
        <dbReference type="Rhea" id="RHEA:24488"/>
        <dbReference type="Rhea" id="RHEA-COMP:10000"/>
        <dbReference type="Rhea" id="RHEA-COMP:10001"/>
        <dbReference type="ChEBI" id="CHEBI:15377"/>
        <dbReference type="ChEBI" id="CHEBI:15378"/>
        <dbReference type="ChEBI" id="CHEBI:33737"/>
        <dbReference type="ChEBI" id="CHEBI:33738"/>
        <dbReference type="ChEBI" id="CHEBI:128753"/>
        <dbReference type="ChEBI" id="CHEBI:128769"/>
        <dbReference type="EC" id="1.17.7.4"/>
    </reaction>
</comment>
<comment type="catalytic activity">
    <reaction evidence="1">
        <text>dimethylallyl diphosphate + 2 oxidized [2Fe-2S]-[ferredoxin] + H2O = (2E)-4-hydroxy-3-methylbut-2-enyl diphosphate + 2 reduced [2Fe-2S]-[ferredoxin] + 2 H(+)</text>
        <dbReference type="Rhea" id="RHEA:24825"/>
        <dbReference type="Rhea" id="RHEA-COMP:10000"/>
        <dbReference type="Rhea" id="RHEA-COMP:10001"/>
        <dbReference type="ChEBI" id="CHEBI:15377"/>
        <dbReference type="ChEBI" id="CHEBI:15378"/>
        <dbReference type="ChEBI" id="CHEBI:33737"/>
        <dbReference type="ChEBI" id="CHEBI:33738"/>
        <dbReference type="ChEBI" id="CHEBI:57623"/>
        <dbReference type="ChEBI" id="CHEBI:128753"/>
        <dbReference type="EC" id="1.17.7.4"/>
    </reaction>
</comment>
<comment type="cofactor">
    <cofactor evidence="1">
        <name>[4Fe-4S] cluster</name>
        <dbReference type="ChEBI" id="CHEBI:49883"/>
    </cofactor>
    <text evidence="1">Binds 1 [4Fe-4S] cluster per subunit.</text>
</comment>
<comment type="pathway">
    <text evidence="1">Isoprenoid biosynthesis; dimethylallyl diphosphate biosynthesis; dimethylallyl diphosphate from (2E)-4-hydroxy-3-methylbutenyl diphosphate: step 1/1.</text>
</comment>
<comment type="pathway">
    <text evidence="1">Isoprenoid biosynthesis; isopentenyl diphosphate biosynthesis via DXP pathway; isopentenyl diphosphate from 1-deoxy-D-xylulose 5-phosphate: step 6/6.</text>
</comment>
<comment type="similarity">
    <text evidence="1">Belongs to the IspH family.</text>
</comment>
<dbReference type="EC" id="1.17.7.4" evidence="1"/>
<dbReference type="EMBL" id="CP000431">
    <property type="protein sequence ID" value="ABG97647.1"/>
    <property type="molecule type" value="Genomic_DNA"/>
</dbReference>
<dbReference type="RefSeq" id="WP_011597962.1">
    <property type="nucleotide sequence ID" value="NC_008268.1"/>
</dbReference>
<dbReference type="SMR" id="Q0S489"/>
<dbReference type="KEGG" id="rha:RHA1_ro05870"/>
<dbReference type="PATRIC" id="fig|101510.16.peg.5911"/>
<dbReference type="eggNOG" id="COG0761">
    <property type="taxonomic scope" value="Bacteria"/>
</dbReference>
<dbReference type="HOGENOM" id="CLU_027486_1_0_11"/>
<dbReference type="OrthoDB" id="9804068at2"/>
<dbReference type="UniPathway" id="UPA00056">
    <property type="reaction ID" value="UER00097"/>
</dbReference>
<dbReference type="UniPathway" id="UPA00059">
    <property type="reaction ID" value="UER00105"/>
</dbReference>
<dbReference type="Proteomes" id="UP000008710">
    <property type="component" value="Chromosome"/>
</dbReference>
<dbReference type="GO" id="GO:0051539">
    <property type="term" value="F:4 iron, 4 sulfur cluster binding"/>
    <property type="evidence" value="ECO:0007669"/>
    <property type="project" value="UniProtKB-UniRule"/>
</dbReference>
<dbReference type="GO" id="GO:0051745">
    <property type="term" value="F:4-hydroxy-3-methylbut-2-enyl diphosphate reductase activity"/>
    <property type="evidence" value="ECO:0007669"/>
    <property type="project" value="UniProtKB-UniRule"/>
</dbReference>
<dbReference type="GO" id="GO:0046872">
    <property type="term" value="F:metal ion binding"/>
    <property type="evidence" value="ECO:0007669"/>
    <property type="project" value="UniProtKB-KW"/>
</dbReference>
<dbReference type="GO" id="GO:0050992">
    <property type="term" value="P:dimethylallyl diphosphate biosynthetic process"/>
    <property type="evidence" value="ECO:0007669"/>
    <property type="project" value="UniProtKB-UniRule"/>
</dbReference>
<dbReference type="GO" id="GO:0019288">
    <property type="term" value="P:isopentenyl diphosphate biosynthetic process, methylerythritol 4-phosphate pathway"/>
    <property type="evidence" value="ECO:0007669"/>
    <property type="project" value="UniProtKB-UniRule"/>
</dbReference>
<dbReference type="GO" id="GO:0016114">
    <property type="term" value="P:terpenoid biosynthetic process"/>
    <property type="evidence" value="ECO:0007669"/>
    <property type="project" value="UniProtKB-UniRule"/>
</dbReference>
<dbReference type="CDD" id="cd13944">
    <property type="entry name" value="lytB_ispH"/>
    <property type="match status" value="1"/>
</dbReference>
<dbReference type="Gene3D" id="3.40.50.11270">
    <property type="match status" value="1"/>
</dbReference>
<dbReference type="Gene3D" id="3.40.1010.20">
    <property type="entry name" value="4-hydroxy-3-methylbut-2-enyl diphosphate reductase, catalytic domain"/>
    <property type="match status" value="2"/>
</dbReference>
<dbReference type="HAMAP" id="MF_00191">
    <property type="entry name" value="IspH"/>
    <property type="match status" value="1"/>
</dbReference>
<dbReference type="InterPro" id="IPR003451">
    <property type="entry name" value="LytB/IspH"/>
</dbReference>
<dbReference type="NCBIfam" id="TIGR00216">
    <property type="entry name" value="ispH_lytB"/>
    <property type="match status" value="1"/>
</dbReference>
<dbReference type="NCBIfam" id="NF002188">
    <property type="entry name" value="PRK01045.1-2"/>
    <property type="match status" value="1"/>
</dbReference>
<dbReference type="NCBIfam" id="NF002189">
    <property type="entry name" value="PRK01045.1-3"/>
    <property type="match status" value="1"/>
</dbReference>
<dbReference type="NCBIfam" id="NF002190">
    <property type="entry name" value="PRK01045.1-4"/>
    <property type="match status" value="1"/>
</dbReference>
<dbReference type="PANTHER" id="PTHR30426">
    <property type="entry name" value="4-HYDROXY-3-METHYLBUT-2-ENYL DIPHOSPHATE REDUCTASE"/>
    <property type="match status" value="1"/>
</dbReference>
<dbReference type="PANTHER" id="PTHR30426:SF0">
    <property type="entry name" value="4-HYDROXY-3-METHYLBUT-2-ENYL DIPHOSPHATE REDUCTASE"/>
    <property type="match status" value="1"/>
</dbReference>
<dbReference type="Pfam" id="PF02401">
    <property type="entry name" value="LYTB"/>
    <property type="match status" value="1"/>
</dbReference>
<feature type="chain" id="PRO_1000021173" description="4-hydroxy-3-methylbut-2-enyl diphosphate reductase">
    <location>
        <begin position="1"/>
        <end position="336"/>
    </location>
</feature>
<feature type="active site" description="Proton donor" evidence="1">
    <location>
        <position position="151"/>
    </location>
</feature>
<feature type="binding site" evidence="1">
    <location>
        <position position="37"/>
    </location>
    <ligand>
        <name>[4Fe-4S] cluster</name>
        <dbReference type="ChEBI" id="CHEBI:49883"/>
    </ligand>
</feature>
<feature type="binding site" evidence="1">
    <location>
        <position position="66"/>
    </location>
    <ligand>
        <name>(2E)-4-hydroxy-3-methylbut-2-enyl diphosphate</name>
        <dbReference type="ChEBI" id="CHEBI:128753"/>
    </ligand>
</feature>
<feature type="binding site" evidence="1">
    <location>
        <position position="66"/>
    </location>
    <ligand>
        <name>dimethylallyl diphosphate</name>
        <dbReference type="ChEBI" id="CHEBI:57623"/>
    </ligand>
</feature>
<feature type="binding site" evidence="1">
    <location>
        <position position="66"/>
    </location>
    <ligand>
        <name>isopentenyl diphosphate</name>
        <dbReference type="ChEBI" id="CHEBI:128769"/>
    </ligand>
</feature>
<feature type="binding site" evidence="1">
    <location>
        <position position="99"/>
    </location>
    <ligand>
        <name>(2E)-4-hydroxy-3-methylbut-2-enyl diphosphate</name>
        <dbReference type="ChEBI" id="CHEBI:128753"/>
    </ligand>
</feature>
<feature type="binding site" evidence="1">
    <location>
        <position position="99"/>
    </location>
    <ligand>
        <name>dimethylallyl diphosphate</name>
        <dbReference type="ChEBI" id="CHEBI:57623"/>
    </ligand>
</feature>
<feature type="binding site" evidence="1">
    <location>
        <position position="99"/>
    </location>
    <ligand>
        <name>isopentenyl diphosphate</name>
        <dbReference type="ChEBI" id="CHEBI:128769"/>
    </ligand>
</feature>
<feature type="binding site" evidence="1">
    <location>
        <position position="121"/>
    </location>
    <ligand>
        <name>[4Fe-4S] cluster</name>
        <dbReference type="ChEBI" id="CHEBI:49883"/>
    </ligand>
</feature>
<feature type="binding site" evidence="1">
    <location>
        <position position="149"/>
    </location>
    <ligand>
        <name>(2E)-4-hydroxy-3-methylbut-2-enyl diphosphate</name>
        <dbReference type="ChEBI" id="CHEBI:128753"/>
    </ligand>
</feature>
<feature type="binding site" evidence="1">
    <location>
        <position position="149"/>
    </location>
    <ligand>
        <name>dimethylallyl diphosphate</name>
        <dbReference type="ChEBI" id="CHEBI:57623"/>
    </ligand>
</feature>
<feature type="binding site" evidence="1">
    <location>
        <position position="149"/>
    </location>
    <ligand>
        <name>isopentenyl diphosphate</name>
        <dbReference type="ChEBI" id="CHEBI:128769"/>
    </ligand>
</feature>
<feature type="binding site" evidence="1">
    <location>
        <position position="189"/>
    </location>
    <ligand>
        <name>(2E)-4-hydroxy-3-methylbut-2-enyl diphosphate</name>
        <dbReference type="ChEBI" id="CHEBI:128753"/>
    </ligand>
</feature>
<feature type="binding site" evidence="1">
    <location>
        <position position="219"/>
    </location>
    <ligand>
        <name>[4Fe-4S] cluster</name>
        <dbReference type="ChEBI" id="CHEBI:49883"/>
    </ligand>
</feature>
<feature type="binding site" evidence="1">
    <location>
        <position position="247"/>
    </location>
    <ligand>
        <name>(2E)-4-hydroxy-3-methylbut-2-enyl diphosphate</name>
        <dbReference type="ChEBI" id="CHEBI:128753"/>
    </ligand>
</feature>
<feature type="binding site" evidence="1">
    <location>
        <position position="247"/>
    </location>
    <ligand>
        <name>dimethylallyl diphosphate</name>
        <dbReference type="ChEBI" id="CHEBI:57623"/>
    </ligand>
</feature>
<feature type="binding site" evidence="1">
    <location>
        <position position="247"/>
    </location>
    <ligand>
        <name>isopentenyl diphosphate</name>
        <dbReference type="ChEBI" id="CHEBI:128769"/>
    </ligand>
</feature>
<feature type="binding site" evidence="1">
    <location>
        <position position="248"/>
    </location>
    <ligand>
        <name>(2E)-4-hydroxy-3-methylbut-2-enyl diphosphate</name>
        <dbReference type="ChEBI" id="CHEBI:128753"/>
    </ligand>
</feature>
<feature type="binding site" evidence="1">
    <location>
        <position position="248"/>
    </location>
    <ligand>
        <name>dimethylallyl diphosphate</name>
        <dbReference type="ChEBI" id="CHEBI:57623"/>
    </ligand>
</feature>
<feature type="binding site" evidence="1">
    <location>
        <position position="248"/>
    </location>
    <ligand>
        <name>isopentenyl diphosphate</name>
        <dbReference type="ChEBI" id="CHEBI:128769"/>
    </ligand>
</feature>
<feature type="binding site" evidence="1">
    <location>
        <position position="249"/>
    </location>
    <ligand>
        <name>(2E)-4-hydroxy-3-methylbut-2-enyl diphosphate</name>
        <dbReference type="ChEBI" id="CHEBI:128753"/>
    </ligand>
</feature>
<feature type="binding site" evidence="1">
    <location>
        <position position="249"/>
    </location>
    <ligand>
        <name>dimethylallyl diphosphate</name>
        <dbReference type="ChEBI" id="CHEBI:57623"/>
    </ligand>
</feature>
<feature type="binding site" evidence="1">
    <location>
        <position position="249"/>
    </location>
    <ligand>
        <name>isopentenyl diphosphate</name>
        <dbReference type="ChEBI" id="CHEBI:128769"/>
    </ligand>
</feature>
<feature type="binding site" evidence="1">
    <location>
        <position position="292"/>
    </location>
    <ligand>
        <name>(2E)-4-hydroxy-3-methylbut-2-enyl diphosphate</name>
        <dbReference type="ChEBI" id="CHEBI:128753"/>
    </ligand>
</feature>
<feature type="binding site" evidence="1">
    <location>
        <position position="292"/>
    </location>
    <ligand>
        <name>dimethylallyl diphosphate</name>
        <dbReference type="ChEBI" id="CHEBI:57623"/>
    </ligand>
</feature>
<feature type="binding site" evidence="1">
    <location>
        <position position="292"/>
    </location>
    <ligand>
        <name>isopentenyl diphosphate</name>
        <dbReference type="ChEBI" id="CHEBI:128769"/>
    </ligand>
</feature>
<proteinExistence type="inferred from homology"/>
<sequence length="336" mass="36318">MSSAVPLNVGITRSADSGASRADGEKRVLLAEPRGYCAGVDRAVETVEKALEKHGAPIYVRKEIVHNRHVVDTLTDQGVVFVDETDEVPEGALLVFSAHGVSPAVHESAAARNLRTIDATCPLVTKVHQEAKRFARDDFDILLIGHEGHEEVEGTAGEAPDHVQLVDGPDSVDAVTVRDESKVIWLSQTTLSVDETMQTVARLRERFPNLQDPPSDDICYATQNRQVAVKAMAPECDLVIVVGSRNSSNSVRLVEVALNAGAKASYLVDYAREVDPAWLDGVRTVGITSGASVPEILVRGVIDLLDEHGFHDVQPVTTANETLVFALPRELRAART</sequence>